<protein>
    <recommendedName>
        <fullName evidence="1">ATP-dependent dethiobiotin synthetase BioD</fullName>
        <ecNumber evidence="1">6.3.3.3</ecNumber>
    </recommendedName>
    <alternativeName>
        <fullName evidence="1">DTB synthetase</fullName>
        <shortName evidence="1">DTBS</shortName>
    </alternativeName>
    <alternativeName>
        <fullName evidence="1">Dethiobiotin synthase</fullName>
    </alternativeName>
</protein>
<gene>
    <name evidence="1" type="primary">bioD</name>
    <name type="ordered locus">MT1621</name>
</gene>
<reference key="1">
    <citation type="journal article" date="2002" name="J. Bacteriol.">
        <title>Whole-genome comparison of Mycobacterium tuberculosis clinical and laboratory strains.</title>
        <authorList>
            <person name="Fleischmann R.D."/>
            <person name="Alland D."/>
            <person name="Eisen J.A."/>
            <person name="Carpenter L."/>
            <person name="White O."/>
            <person name="Peterson J.D."/>
            <person name="DeBoy R.T."/>
            <person name="Dodson R.J."/>
            <person name="Gwinn M.L."/>
            <person name="Haft D.H."/>
            <person name="Hickey E.K."/>
            <person name="Kolonay J.F."/>
            <person name="Nelson W.C."/>
            <person name="Umayam L.A."/>
            <person name="Ermolaeva M.D."/>
            <person name="Salzberg S.L."/>
            <person name="Delcher A."/>
            <person name="Utterback T.R."/>
            <person name="Weidman J.F."/>
            <person name="Khouri H.M."/>
            <person name="Gill J."/>
            <person name="Mikula A."/>
            <person name="Bishai W."/>
            <person name="Jacobs W.R. Jr."/>
            <person name="Venter J.C."/>
            <person name="Fraser C.M."/>
        </authorList>
    </citation>
    <scope>NUCLEOTIDE SEQUENCE [LARGE SCALE GENOMIC DNA]</scope>
    <source>
        <strain>CDC 1551 / Oshkosh</strain>
    </source>
</reference>
<comment type="function">
    <text evidence="1">Catalyzes a mechanistically unusual reaction, the ATP-dependent insertion of CO2 between the N7 and N8 nitrogen atoms of 7,8-diaminopelargonic acid (DAPA, also called 7,8-diammoniononanoate) to form a ureido ring.</text>
</comment>
<comment type="catalytic activity">
    <reaction evidence="1">
        <text>(7R,8S)-7,8-diammoniononanoate + CO2 + ATP = (4R,5S)-dethiobiotin + ADP + phosphate + 3 H(+)</text>
        <dbReference type="Rhea" id="RHEA:15805"/>
        <dbReference type="ChEBI" id="CHEBI:15378"/>
        <dbReference type="ChEBI" id="CHEBI:16526"/>
        <dbReference type="ChEBI" id="CHEBI:30616"/>
        <dbReference type="ChEBI" id="CHEBI:43474"/>
        <dbReference type="ChEBI" id="CHEBI:149469"/>
        <dbReference type="ChEBI" id="CHEBI:149473"/>
        <dbReference type="ChEBI" id="CHEBI:456216"/>
        <dbReference type="EC" id="6.3.3.3"/>
    </reaction>
</comment>
<comment type="cofactor">
    <cofactor evidence="1">
        <name>Mg(2+)</name>
        <dbReference type="ChEBI" id="CHEBI:18420"/>
    </cofactor>
</comment>
<comment type="pathway">
    <text evidence="1">Cofactor biosynthesis; biotin biosynthesis; biotin from 7,8-diaminononanoate: step 1/2.</text>
</comment>
<comment type="subunit">
    <text evidence="1">Homodimer.</text>
</comment>
<comment type="subcellular location">
    <subcellularLocation>
        <location evidence="1">Cytoplasm</location>
    </subcellularLocation>
</comment>
<comment type="similarity">
    <text evidence="1">Belongs to the dethiobiotin synthetase family.</text>
</comment>
<evidence type="ECO:0000255" key="1">
    <source>
        <dbReference type="HAMAP-Rule" id="MF_00336"/>
    </source>
</evidence>
<name>BIOD_MYCTO</name>
<sequence>MTILVVTGTGTGVGKTVVCAALASAARQAGIDVAVCKPVQTGTARGDDDLAEVGRLAGVTQLAGLARYPQPMAPAAAAEHAGMALPARDQIVRLIADLDRPGRLTLVEGAGGLLVELAEPGVTLRDVAVDVAAAALVVVTADLGTLNHTKLTLEALAAQQVSCAGLVIGSWPDPPGLVAASNRSALARIATVRAALPAGAASLDAGDFAAMSAAAFDRNWVAGLVG</sequence>
<accession>P9WPQ4</accession>
<accession>L0T9U0</accession>
<accession>O06620</accession>
<organism>
    <name type="scientific">Mycobacterium tuberculosis (strain CDC 1551 / Oshkosh)</name>
    <dbReference type="NCBI Taxonomy" id="83331"/>
    <lineage>
        <taxon>Bacteria</taxon>
        <taxon>Bacillati</taxon>
        <taxon>Actinomycetota</taxon>
        <taxon>Actinomycetes</taxon>
        <taxon>Mycobacteriales</taxon>
        <taxon>Mycobacteriaceae</taxon>
        <taxon>Mycobacterium</taxon>
        <taxon>Mycobacterium tuberculosis complex</taxon>
    </lineage>
</organism>
<dbReference type="EC" id="6.3.3.3" evidence="1"/>
<dbReference type="EMBL" id="AE000516">
    <property type="protein sequence ID" value="AAK45888.1"/>
    <property type="molecule type" value="Genomic_DNA"/>
</dbReference>
<dbReference type="PIR" id="D70540">
    <property type="entry name" value="D70540"/>
</dbReference>
<dbReference type="RefSeq" id="WP_003407806.1">
    <property type="nucleotide sequence ID" value="NZ_KK341227.1"/>
</dbReference>
<dbReference type="SMR" id="P9WPQ4"/>
<dbReference type="KEGG" id="mtc:MT1621"/>
<dbReference type="PATRIC" id="fig|83331.31.peg.1743"/>
<dbReference type="HOGENOM" id="CLU_072551_1_0_11"/>
<dbReference type="UniPathway" id="UPA00078">
    <property type="reaction ID" value="UER00161"/>
</dbReference>
<dbReference type="Proteomes" id="UP000001020">
    <property type="component" value="Chromosome"/>
</dbReference>
<dbReference type="GO" id="GO:0005829">
    <property type="term" value="C:cytosol"/>
    <property type="evidence" value="ECO:0007669"/>
    <property type="project" value="TreeGrafter"/>
</dbReference>
<dbReference type="GO" id="GO:0005524">
    <property type="term" value="F:ATP binding"/>
    <property type="evidence" value="ECO:0007669"/>
    <property type="project" value="UniProtKB-UniRule"/>
</dbReference>
<dbReference type="GO" id="GO:0004141">
    <property type="term" value="F:dethiobiotin synthase activity"/>
    <property type="evidence" value="ECO:0007669"/>
    <property type="project" value="UniProtKB-UniRule"/>
</dbReference>
<dbReference type="GO" id="GO:0000287">
    <property type="term" value="F:magnesium ion binding"/>
    <property type="evidence" value="ECO:0007669"/>
    <property type="project" value="UniProtKB-UniRule"/>
</dbReference>
<dbReference type="GO" id="GO:0009102">
    <property type="term" value="P:biotin biosynthetic process"/>
    <property type="evidence" value="ECO:0007669"/>
    <property type="project" value="UniProtKB-UniRule"/>
</dbReference>
<dbReference type="FunFam" id="3.40.50.300:FF:002079">
    <property type="entry name" value="ATP-dependent dethiobiotin synthetase BioD"/>
    <property type="match status" value="1"/>
</dbReference>
<dbReference type="Gene3D" id="3.40.50.300">
    <property type="entry name" value="P-loop containing nucleotide triphosphate hydrolases"/>
    <property type="match status" value="1"/>
</dbReference>
<dbReference type="HAMAP" id="MF_00336">
    <property type="entry name" value="BioD"/>
    <property type="match status" value="1"/>
</dbReference>
<dbReference type="InterPro" id="IPR004472">
    <property type="entry name" value="DTB_synth_BioD"/>
</dbReference>
<dbReference type="InterPro" id="IPR027417">
    <property type="entry name" value="P-loop_NTPase"/>
</dbReference>
<dbReference type="NCBIfam" id="TIGR00347">
    <property type="entry name" value="bioD"/>
    <property type="match status" value="1"/>
</dbReference>
<dbReference type="PANTHER" id="PTHR43210">
    <property type="entry name" value="DETHIOBIOTIN SYNTHETASE"/>
    <property type="match status" value="1"/>
</dbReference>
<dbReference type="PANTHER" id="PTHR43210:SF5">
    <property type="entry name" value="DETHIOBIOTIN SYNTHETASE"/>
    <property type="match status" value="1"/>
</dbReference>
<dbReference type="Pfam" id="PF13500">
    <property type="entry name" value="AAA_26"/>
    <property type="match status" value="1"/>
</dbReference>
<dbReference type="SUPFAM" id="SSF52540">
    <property type="entry name" value="P-loop containing nucleoside triphosphate hydrolases"/>
    <property type="match status" value="1"/>
</dbReference>
<keyword id="KW-0067">ATP-binding</keyword>
<keyword id="KW-0093">Biotin biosynthesis</keyword>
<keyword id="KW-0963">Cytoplasm</keyword>
<keyword id="KW-0436">Ligase</keyword>
<keyword id="KW-0460">Magnesium</keyword>
<keyword id="KW-0479">Metal-binding</keyword>
<keyword id="KW-0547">Nucleotide-binding</keyword>
<keyword id="KW-1185">Reference proteome</keyword>
<proteinExistence type="inferred from homology"/>
<feature type="chain" id="PRO_0000426911" description="ATP-dependent dethiobiotin synthetase BioD">
    <location>
        <begin position="1"/>
        <end position="226"/>
    </location>
</feature>
<feature type="active site" evidence="1">
    <location>
        <position position="37"/>
    </location>
</feature>
<feature type="binding site" evidence="1">
    <location>
        <begin position="12"/>
        <end position="17"/>
    </location>
    <ligand>
        <name>ATP</name>
        <dbReference type="ChEBI" id="CHEBI:30616"/>
    </ligand>
</feature>
<feature type="binding site" evidence="1">
    <location>
        <position position="16"/>
    </location>
    <ligand>
        <name>Mg(2+)</name>
        <dbReference type="ChEBI" id="CHEBI:18420"/>
    </ligand>
</feature>
<feature type="binding site" evidence="1">
    <location>
        <position position="41"/>
    </location>
    <ligand>
        <name>substrate</name>
    </ligand>
</feature>
<feature type="binding site" evidence="1">
    <location>
        <position position="49"/>
    </location>
    <ligand>
        <name>ATP</name>
        <dbReference type="ChEBI" id="CHEBI:30616"/>
    </ligand>
</feature>
<feature type="binding site" evidence="1">
    <location>
        <position position="49"/>
    </location>
    <ligand>
        <name>Mg(2+)</name>
        <dbReference type="ChEBI" id="CHEBI:18420"/>
    </ligand>
</feature>
<feature type="binding site" evidence="1">
    <location>
        <begin position="108"/>
        <end position="111"/>
    </location>
    <ligand>
        <name>ATP</name>
        <dbReference type="ChEBI" id="CHEBI:30616"/>
    </ligand>
</feature>
<feature type="binding site" evidence="1">
    <location>
        <position position="108"/>
    </location>
    <ligand>
        <name>Mg(2+)</name>
        <dbReference type="ChEBI" id="CHEBI:18420"/>
    </ligand>
</feature>
<feature type="binding site" evidence="1">
    <location>
        <begin position="169"/>
        <end position="170"/>
    </location>
    <ligand>
        <name>ATP</name>
        <dbReference type="ChEBI" id="CHEBI:30616"/>
    </ligand>
</feature>
<feature type="binding site" evidence="1">
    <location>
        <begin position="197"/>
        <end position="199"/>
    </location>
    <ligand>
        <name>ATP</name>
        <dbReference type="ChEBI" id="CHEBI:30616"/>
    </ligand>
</feature>